<organism>
    <name type="scientific">Staphylococcus aureus (strain COL)</name>
    <dbReference type="NCBI Taxonomy" id="93062"/>
    <lineage>
        <taxon>Bacteria</taxon>
        <taxon>Bacillati</taxon>
        <taxon>Bacillota</taxon>
        <taxon>Bacilli</taxon>
        <taxon>Bacillales</taxon>
        <taxon>Staphylococcaceae</taxon>
        <taxon>Staphylococcus</taxon>
    </lineage>
</organism>
<keyword id="KW-0002">3D-structure</keyword>
<keyword id="KW-0963">Cytoplasm</keyword>
<keyword id="KW-0312">Gluconeogenesis</keyword>
<keyword id="KW-0324">Glycolysis</keyword>
<keyword id="KW-0413">Isomerase</keyword>
<dbReference type="EC" id="5.3.1.9" evidence="1"/>
<dbReference type="EMBL" id="CP000046">
    <property type="protein sequence ID" value="AAW37934.1"/>
    <property type="molecule type" value="Genomic_DNA"/>
</dbReference>
<dbReference type="RefSeq" id="WP_000148855.1">
    <property type="nucleotide sequence ID" value="NZ_JBGOFO010000002.1"/>
</dbReference>
<dbReference type="PDB" id="3FF1">
    <property type="method" value="X-ray"/>
    <property type="resolution" value="1.65 A"/>
    <property type="chains" value="A/B=1-443"/>
</dbReference>
<dbReference type="PDBsum" id="3FF1"/>
<dbReference type="SMR" id="Q5HHC2"/>
<dbReference type="KEGG" id="sac:SACOL0966"/>
<dbReference type="HOGENOM" id="CLU_037303_0_1_9"/>
<dbReference type="UniPathway" id="UPA00109">
    <property type="reaction ID" value="UER00181"/>
</dbReference>
<dbReference type="UniPathway" id="UPA00138"/>
<dbReference type="EvolutionaryTrace" id="Q5HHC2"/>
<dbReference type="Proteomes" id="UP000000530">
    <property type="component" value="Chromosome"/>
</dbReference>
<dbReference type="GO" id="GO:0005829">
    <property type="term" value="C:cytosol"/>
    <property type="evidence" value="ECO:0007669"/>
    <property type="project" value="TreeGrafter"/>
</dbReference>
<dbReference type="GO" id="GO:0097367">
    <property type="term" value="F:carbohydrate derivative binding"/>
    <property type="evidence" value="ECO:0007669"/>
    <property type="project" value="InterPro"/>
</dbReference>
<dbReference type="GO" id="GO:0004347">
    <property type="term" value="F:glucose-6-phosphate isomerase activity"/>
    <property type="evidence" value="ECO:0007669"/>
    <property type="project" value="UniProtKB-UniRule"/>
</dbReference>
<dbReference type="GO" id="GO:0048029">
    <property type="term" value="F:monosaccharide binding"/>
    <property type="evidence" value="ECO:0007669"/>
    <property type="project" value="TreeGrafter"/>
</dbReference>
<dbReference type="GO" id="GO:0006094">
    <property type="term" value="P:gluconeogenesis"/>
    <property type="evidence" value="ECO:0007669"/>
    <property type="project" value="UniProtKB-UniRule"/>
</dbReference>
<dbReference type="GO" id="GO:0051156">
    <property type="term" value="P:glucose 6-phosphate metabolic process"/>
    <property type="evidence" value="ECO:0007669"/>
    <property type="project" value="TreeGrafter"/>
</dbReference>
<dbReference type="GO" id="GO:0006096">
    <property type="term" value="P:glycolytic process"/>
    <property type="evidence" value="ECO:0007669"/>
    <property type="project" value="UniProtKB-UniRule"/>
</dbReference>
<dbReference type="CDD" id="cd05015">
    <property type="entry name" value="SIS_PGI_1"/>
    <property type="match status" value="1"/>
</dbReference>
<dbReference type="CDD" id="cd05016">
    <property type="entry name" value="SIS_PGI_2"/>
    <property type="match status" value="1"/>
</dbReference>
<dbReference type="FunFam" id="3.40.50.10490:FF:000015">
    <property type="entry name" value="Glucose-6-phosphate isomerase"/>
    <property type="match status" value="1"/>
</dbReference>
<dbReference type="FunFam" id="3.40.50.10490:FF:000016">
    <property type="entry name" value="Glucose-6-phosphate isomerase"/>
    <property type="match status" value="1"/>
</dbReference>
<dbReference type="Gene3D" id="3.40.50.10490">
    <property type="entry name" value="Glucose-6-phosphate isomerase like protein, domain 1"/>
    <property type="match status" value="3"/>
</dbReference>
<dbReference type="HAMAP" id="MF_00473">
    <property type="entry name" value="G6P_isomerase"/>
    <property type="match status" value="1"/>
</dbReference>
<dbReference type="InterPro" id="IPR001672">
    <property type="entry name" value="G6P_Isomerase"/>
</dbReference>
<dbReference type="InterPro" id="IPR018189">
    <property type="entry name" value="Phosphoglucose_isomerase_CS"/>
</dbReference>
<dbReference type="InterPro" id="IPR046348">
    <property type="entry name" value="SIS_dom_sf"/>
</dbReference>
<dbReference type="InterPro" id="IPR035476">
    <property type="entry name" value="SIS_PGI_1"/>
</dbReference>
<dbReference type="InterPro" id="IPR035482">
    <property type="entry name" value="SIS_PGI_2"/>
</dbReference>
<dbReference type="NCBIfam" id="NF010697">
    <property type="entry name" value="PRK14097.1"/>
    <property type="match status" value="1"/>
</dbReference>
<dbReference type="PANTHER" id="PTHR11469">
    <property type="entry name" value="GLUCOSE-6-PHOSPHATE ISOMERASE"/>
    <property type="match status" value="1"/>
</dbReference>
<dbReference type="PANTHER" id="PTHR11469:SF1">
    <property type="entry name" value="GLUCOSE-6-PHOSPHATE ISOMERASE"/>
    <property type="match status" value="1"/>
</dbReference>
<dbReference type="Pfam" id="PF00342">
    <property type="entry name" value="PGI"/>
    <property type="match status" value="1"/>
</dbReference>
<dbReference type="PRINTS" id="PR00662">
    <property type="entry name" value="G6PISOMERASE"/>
</dbReference>
<dbReference type="SUPFAM" id="SSF53697">
    <property type="entry name" value="SIS domain"/>
    <property type="match status" value="1"/>
</dbReference>
<dbReference type="PROSITE" id="PS00765">
    <property type="entry name" value="P_GLUCOSE_ISOMERASE_1"/>
    <property type="match status" value="1"/>
</dbReference>
<dbReference type="PROSITE" id="PS00174">
    <property type="entry name" value="P_GLUCOSE_ISOMERASE_2"/>
    <property type="match status" value="1"/>
</dbReference>
<dbReference type="PROSITE" id="PS51463">
    <property type="entry name" value="P_GLUCOSE_ISOMERASE_3"/>
    <property type="match status" value="1"/>
</dbReference>
<protein>
    <recommendedName>
        <fullName evidence="1">Glucose-6-phosphate isomerase</fullName>
        <shortName evidence="1">GPI</shortName>
        <ecNumber evidence="1">5.3.1.9</ecNumber>
    </recommendedName>
    <alternativeName>
        <fullName evidence="1">Phosphoglucose isomerase</fullName>
        <shortName evidence="1">PGI</shortName>
    </alternativeName>
    <alternativeName>
        <fullName evidence="1">Phosphohexose isomerase</fullName>
        <shortName evidence="1">PHI</shortName>
    </alternativeName>
</protein>
<proteinExistence type="evidence at protein level"/>
<reference key="1">
    <citation type="journal article" date="2005" name="J. Bacteriol.">
        <title>Insights on evolution of virulence and resistance from the complete genome analysis of an early methicillin-resistant Staphylococcus aureus strain and a biofilm-producing methicillin-resistant Staphylococcus epidermidis strain.</title>
        <authorList>
            <person name="Gill S.R."/>
            <person name="Fouts D.E."/>
            <person name="Archer G.L."/>
            <person name="Mongodin E.F."/>
            <person name="DeBoy R.T."/>
            <person name="Ravel J."/>
            <person name="Paulsen I.T."/>
            <person name="Kolonay J.F."/>
            <person name="Brinkac L.M."/>
            <person name="Beanan M.J."/>
            <person name="Dodson R.J."/>
            <person name="Daugherty S.C."/>
            <person name="Madupu R."/>
            <person name="Angiuoli S.V."/>
            <person name="Durkin A.S."/>
            <person name="Haft D.H."/>
            <person name="Vamathevan J.J."/>
            <person name="Khouri H."/>
            <person name="Utterback T.R."/>
            <person name="Lee C."/>
            <person name="Dimitrov G."/>
            <person name="Jiang L."/>
            <person name="Qin H."/>
            <person name="Weidman J."/>
            <person name="Tran K."/>
            <person name="Kang K.H."/>
            <person name="Hance I.R."/>
            <person name="Nelson K.E."/>
            <person name="Fraser C.M."/>
        </authorList>
    </citation>
    <scope>NUCLEOTIDE SEQUENCE [LARGE SCALE GENOMIC DNA]</scope>
    <source>
        <strain>COL</strain>
    </source>
</reference>
<sequence>MTHIQLDFSKTLEFFGEHELKQQQEIVKSIHKTIHEGTGAGSDFLGWVDLPVDYDKEEFSRIVEASKRIKENSDVLVVIGIGGSYLGARAAIEMLTSSFRNSNEYPEIVFVGNHLSSTYTKELVDYLADKDFSVNVISKSGTTTEPAVAFRLFKQLVEERYGKEEAQKRIFATTDKEKGALKQLATNEGYETFIVPDDVGGRYSVLTAVGLLPIATAGINIEAMMIGAAKAREELSSDKLEENIAYQYATIRNILYAKGYTTEMLINYEPSMQYFNEWWKQLFGESEGKDFKGIYPSSANYTTDLHSLGQYVQEGRRFLFETVVKVNHPKYDITIEKDSDDLDGLNYLAGKTIDEVNTKAFEGTLLAHTDGGVPNMVVNIPQLDEETFGYVVYFFELACAMSGYQLGVNPFNQPGVEAYKQNMFALLGKPGFEDLKKELEERL</sequence>
<feature type="chain" id="PRO_0000180726" description="Glucose-6-phosphate isomerase">
    <location>
        <begin position="1"/>
        <end position="443"/>
    </location>
</feature>
<feature type="active site" description="Proton donor" evidence="1">
    <location>
        <position position="285"/>
    </location>
</feature>
<feature type="active site" evidence="1">
    <location>
        <position position="306"/>
    </location>
</feature>
<feature type="active site" evidence="1">
    <location>
        <position position="420"/>
    </location>
</feature>
<feature type="strand" evidence="2">
    <location>
        <begin position="3"/>
        <end position="7"/>
    </location>
</feature>
<feature type="helix" evidence="2">
    <location>
        <begin position="11"/>
        <end position="13"/>
    </location>
</feature>
<feature type="helix" evidence="2">
    <location>
        <begin position="17"/>
        <end position="21"/>
    </location>
</feature>
<feature type="helix" evidence="2">
    <location>
        <begin position="24"/>
        <end position="36"/>
    </location>
</feature>
<feature type="helix" evidence="2">
    <location>
        <begin position="42"/>
        <end position="44"/>
    </location>
</feature>
<feature type="turn" evidence="2">
    <location>
        <begin position="46"/>
        <end position="49"/>
    </location>
</feature>
<feature type="helix" evidence="2">
    <location>
        <begin position="50"/>
        <end position="53"/>
    </location>
</feature>
<feature type="helix" evidence="2">
    <location>
        <begin position="56"/>
        <end position="72"/>
    </location>
</feature>
<feature type="strand" evidence="2">
    <location>
        <begin position="74"/>
        <end position="79"/>
    </location>
</feature>
<feature type="helix" evidence="2">
    <location>
        <begin position="82"/>
        <end position="84"/>
    </location>
</feature>
<feature type="helix" evidence="2">
    <location>
        <begin position="86"/>
        <end position="95"/>
    </location>
</feature>
<feature type="strand" evidence="2">
    <location>
        <begin position="107"/>
        <end position="114"/>
    </location>
</feature>
<feature type="helix" evidence="2">
    <location>
        <begin position="117"/>
        <end position="126"/>
    </location>
</feature>
<feature type="helix" evidence="2">
    <location>
        <begin position="127"/>
        <end position="129"/>
    </location>
</feature>
<feature type="strand" evidence="2">
    <location>
        <begin position="132"/>
        <end position="137"/>
    </location>
</feature>
<feature type="strand" evidence="2">
    <location>
        <begin position="139"/>
        <end position="141"/>
    </location>
</feature>
<feature type="helix" evidence="2">
    <location>
        <begin position="144"/>
        <end position="161"/>
    </location>
</feature>
<feature type="helix" evidence="2">
    <location>
        <begin position="163"/>
        <end position="169"/>
    </location>
</feature>
<feature type="strand" evidence="2">
    <location>
        <begin position="170"/>
        <end position="174"/>
    </location>
</feature>
<feature type="helix" evidence="2">
    <location>
        <begin position="180"/>
        <end position="188"/>
    </location>
</feature>
<feature type="strand" evidence="2">
    <location>
        <begin position="191"/>
        <end position="194"/>
    </location>
</feature>
<feature type="helix" evidence="2">
    <location>
        <begin position="201"/>
        <end position="203"/>
    </location>
</feature>
<feature type="helix" evidence="2">
    <location>
        <begin position="208"/>
        <end position="216"/>
    </location>
</feature>
<feature type="helix" evidence="2">
    <location>
        <begin position="221"/>
        <end position="234"/>
    </location>
</feature>
<feature type="helix" evidence="2">
    <location>
        <begin position="240"/>
        <end position="242"/>
    </location>
</feature>
<feature type="helix" evidence="2">
    <location>
        <begin position="244"/>
        <end position="257"/>
    </location>
</feature>
<feature type="strand" evidence="2">
    <location>
        <begin position="262"/>
        <end position="269"/>
    </location>
</feature>
<feature type="helix" evidence="2">
    <location>
        <begin position="270"/>
        <end position="272"/>
    </location>
</feature>
<feature type="helix" evidence="2">
    <location>
        <begin position="273"/>
        <end position="287"/>
    </location>
</feature>
<feature type="strand" evidence="2">
    <location>
        <begin position="295"/>
        <end position="300"/>
    </location>
</feature>
<feature type="helix" evidence="2">
    <location>
        <begin position="303"/>
        <end position="306"/>
    </location>
</feature>
<feature type="helix" evidence="2">
    <location>
        <begin position="309"/>
        <end position="314"/>
    </location>
</feature>
<feature type="strand" evidence="2">
    <location>
        <begin position="319"/>
        <end position="328"/>
    </location>
</feature>
<feature type="helix" evidence="2">
    <location>
        <begin position="345"/>
        <end position="348"/>
    </location>
</feature>
<feature type="helix" evidence="2">
    <location>
        <begin position="353"/>
        <end position="370"/>
    </location>
</feature>
<feature type="strand" evidence="2">
    <location>
        <begin position="375"/>
        <end position="381"/>
    </location>
</feature>
<feature type="helix" evidence="2">
    <location>
        <begin position="385"/>
        <end position="406"/>
    </location>
</feature>
<feature type="helix" evidence="2">
    <location>
        <begin position="414"/>
        <end position="416"/>
    </location>
</feature>
<feature type="helix" evidence="2">
    <location>
        <begin position="417"/>
        <end position="426"/>
    </location>
</feature>
<feature type="helix" evidence="2">
    <location>
        <begin position="433"/>
        <end position="441"/>
    </location>
</feature>
<evidence type="ECO:0000255" key="1">
    <source>
        <dbReference type="HAMAP-Rule" id="MF_00473"/>
    </source>
</evidence>
<evidence type="ECO:0007829" key="2">
    <source>
        <dbReference type="PDB" id="3FF1"/>
    </source>
</evidence>
<gene>
    <name evidence="1" type="primary">pgi</name>
    <name type="ordered locus">SACOL0966</name>
</gene>
<name>G6PI_STAAC</name>
<accession>Q5HHC2</accession>
<comment type="function">
    <text evidence="1">Catalyzes the reversible isomerization of glucose-6-phosphate to fructose-6-phosphate.</text>
</comment>
<comment type="catalytic activity">
    <reaction evidence="1">
        <text>alpha-D-glucose 6-phosphate = beta-D-fructose 6-phosphate</text>
        <dbReference type="Rhea" id="RHEA:11816"/>
        <dbReference type="ChEBI" id="CHEBI:57634"/>
        <dbReference type="ChEBI" id="CHEBI:58225"/>
        <dbReference type="EC" id="5.3.1.9"/>
    </reaction>
</comment>
<comment type="pathway">
    <text evidence="1">Carbohydrate biosynthesis; gluconeogenesis.</text>
</comment>
<comment type="pathway">
    <text evidence="1">Carbohydrate degradation; glycolysis; D-glyceraldehyde 3-phosphate and glycerone phosphate from D-glucose: step 2/4.</text>
</comment>
<comment type="subcellular location">
    <subcellularLocation>
        <location evidence="1">Cytoplasm</location>
    </subcellularLocation>
</comment>
<comment type="similarity">
    <text evidence="1">Belongs to the GPI family.</text>
</comment>